<evidence type="ECO:0000250" key="1">
    <source>
        <dbReference type="UniProtKB" id="P54317"/>
    </source>
</evidence>
<evidence type="ECO:0000250" key="2">
    <source>
        <dbReference type="UniProtKB" id="P54318"/>
    </source>
</evidence>
<evidence type="ECO:0000255" key="3"/>
<evidence type="ECO:0000255" key="4">
    <source>
        <dbReference type="PROSITE-ProRule" id="PRU00152"/>
    </source>
</evidence>
<evidence type="ECO:0000255" key="5">
    <source>
        <dbReference type="PROSITE-ProRule" id="PRU10037"/>
    </source>
</evidence>
<evidence type="ECO:0000269" key="6">
    <source>
    </source>
</evidence>
<evidence type="ECO:0000269" key="7">
    <source>
    </source>
</evidence>
<evidence type="ECO:0000269" key="8">
    <source>
    </source>
</evidence>
<evidence type="ECO:0000269" key="9">
    <source>
    </source>
</evidence>
<evidence type="ECO:0000305" key="10"/>
<evidence type="ECO:0000305" key="11">
    <source>
    </source>
</evidence>
<evidence type="ECO:0000305" key="12">
    <source>
    </source>
</evidence>
<evidence type="ECO:0000312" key="13">
    <source>
        <dbReference type="MGI" id="MGI:1336202"/>
    </source>
</evidence>
<keyword id="KW-0106">Calcium</keyword>
<keyword id="KW-0966">Cell projection</keyword>
<keyword id="KW-0968">Cytoplasmic vesicle</keyword>
<keyword id="KW-1015">Disulfide bond</keyword>
<keyword id="KW-0325">Glycoprotein</keyword>
<keyword id="KW-0378">Hydrolase</keyword>
<keyword id="KW-0442">Lipid degradation</keyword>
<keyword id="KW-0443">Lipid metabolism</keyword>
<keyword id="KW-0472">Membrane</keyword>
<keyword id="KW-0479">Metal-binding</keyword>
<keyword id="KW-1185">Reference proteome</keyword>
<keyword id="KW-0964">Secreted</keyword>
<keyword id="KW-0732">Signal</keyword>
<feature type="signal peptide" evidence="3">
    <location>
        <begin position="1"/>
        <end position="30"/>
    </location>
</feature>
<feature type="chain" id="PRO_0000017794" description="Pancreatic lipase-related protein 2">
    <location>
        <begin position="31"/>
        <end position="482"/>
    </location>
</feature>
<feature type="domain" description="PLAT" evidence="4">
    <location>
        <begin position="370"/>
        <end position="482"/>
    </location>
</feature>
<feature type="region of interest" description="Required for galactolipase activity" evidence="1">
    <location>
        <begin position="106"/>
        <end position="118"/>
    </location>
</feature>
<feature type="region of interest" description="Required for galactolipase activity" evidence="1">
    <location>
        <begin position="270"/>
        <end position="292"/>
    </location>
</feature>
<feature type="active site" description="Nucleophile" evidence="1">
    <location>
        <position position="184"/>
    </location>
</feature>
<feature type="active site" description="Charge relay system" evidence="1 5">
    <location>
        <position position="208"/>
    </location>
</feature>
<feature type="active site" description="Charge relay system" evidence="1 5">
    <location>
        <position position="295"/>
    </location>
</feature>
<feature type="binding site" evidence="1">
    <location>
        <position position="219"/>
    </location>
    <ligand>
        <name>Ca(2+)</name>
        <dbReference type="ChEBI" id="CHEBI:29108"/>
    </ligand>
</feature>
<feature type="binding site" evidence="1">
    <location>
        <position position="222"/>
    </location>
    <ligand>
        <name>Ca(2+)</name>
        <dbReference type="ChEBI" id="CHEBI:29108"/>
    </ligand>
</feature>
<feature type="binding site" evidence="1">
    <location>
        <position position="224"/>
    </location>
    <ligand>
        <name>Ca(2+)</name>
        <dbReference type="ChEBI" id="CHEBI:29108"/>
    </ligand>
</feature>
<feature type="binding site" evidence="1">
    <location>
        <position position="227"/>
    </location>
    <ligand>
        <name>Ca(2+)</name>
        <dbReference type="ChEBI" id="CHEBI:29108"/>
    </ligand>
</feature>
<feature type="glycosylation site" description="N-linked (GlcNAc...) asparagine" evidence="3">
    <location>
        <position position="92"/>
    </location>
</feature>
<feature type="glycosylation site" description="N-linked (GlcNAc...) asparagine" evidence="1">
    <location>
        <position position="366"/>
    </location>
</feature>
<feature type="glycosylation site" description="N-linked (GlcNAc...) asparagine" evidence="3">
    <location>
        <position position="441"/>
    </location>
</feature>
<feature type="disulfide bond" evidence="4">
    <location>
        <begin position="34"/>
        <end position="40"/>
    </location>
</feature>
<feature type="disulfide bond" evidence="4">
    <location>
        <begin position="122"/>
        <end position="133"/>
    </location>
</feature>
<feature type="disulfide bond" evidence="4">
    <location>
        <begin position="269"/>
        <end position="293"/>
    </location>
</feature>
<feature type="disulfide bond" evidence="4">
    <location>
        <begin position="317"/>
        <end position="328"/>
    </location>
</feature>
<feature type="disulfide bond" evidence="1 4">
    <location>
        <begin position="331"/>
        <end position="336"/>
    </location>
</feature>
<feature type="disulfide bond" evidence="4">
    <location>
        <begin position="466"/>
        <end position="482"/>
    </location>
</feature>
<feature type="sequence conflict" description="In Ref. 1; AAA37491." evidence="10" ref="1">
    <original>V</original>
    <variation>L</variation>
    <location>
        <position position="156"/>
    </location>
</feature>
<feature type="sequence conflict" description="In Ref. 1; AAA37491." evidence="10" ref="1">
    <original>G</original>
    <variation>P</variation>
    <location>
        <position position="182"/>
    </location>
</feature>
<feature type="sequence conflict" description="In Ref. 1; AAA37491." evidence="10" ref="1">
    <original>M</original>
    <variation>I</variation>
    <location>
        <position position="266"/>
    </location>
</feature>
<feature type="sequence conflict" description="In Ref. 1; AAA37491." evidence="10" ref="1">
    <original>C</original>
    <variation>S</variation>
    <location>
        <position position="331"/>
    </location>
</feature>
<feature type="sequence conflict" description="In Ref. 1; AAA37491." evidence="10" ref="1">
    <original>GDS</original>
    <variation>ADT</variation>
    <location>
        <begin position="362"/>
        <end position="364"/>
    </location>
</feature>
<feature type="sequence conflict" description="In Ref. 1; AAA37491." evidence="10" ref="1">
    <original>A</original>
    <variation>P</variation>
    <location>
        <position position="381"/>
    </location>
</feature>
<feature type="sequence conflict" description="In Ref. 1; AAA37491." evidence="10" ref="1">
    <original>G</original>
    <variation>A</variation>
    <location>
        <position position="397"/>
    </location>
</feature>
<feature type="sequence conflict" description="In Ref. 1; AAA37491." evidence="10" ref="1">
    <original>VQRG</original>
    <variation>LQRA</variation>
    <location>
        <begin position="454"/>
        <end position="457"/>
    </location>
</feature>
<feature type="sequence conflict" description="In Ref. 1; AAA37491." evidence="10" ref="1">
    <original>S</original>
    <variation>T</variation>
    <location>
        <position position="467"/>
    </location>
</feature>
<accession>P17892</accession>
<accession>Q4VBW7</accession>
<proteinExistence type="evidence at protein level"/>
<comment type="function">
    <text evidence="1 2 6 7 8 9">Lipase that primarily hydrolyzes triglycerides and galactosylglycerides (PubMed:21382969, PubMed:9813028). In neonates, may play a major role in pancreatic digestion of dietary fats such as milk fat globules enriched in long-chain triglycerides (PubMed:9813028). Hydrolyzes short-, medium- and long-chain fatty acyls in triglycerides without apparent positional specificity (PubMed:21382969). Can completely deacylate triacylglycerols (By similarity). When the liver matures and bile salt synthesis increases, likely functions mainly as a galactolipase and monoacylglycerol lipase. Hydrolyzes monogalactosyldiglycerols (MGDG) and digalactosyldiacylglycerols (DGDG) present in a plant-based diet, releasing long-chain polyunsaturated fatty acids (By similarity). Hydrolyzes medium- and long-chain fatty acyls in galactolipids (By similarity). May act together with LIPF to hydrolyze partially digested triglycerides (By similarity). Hydrolyzes long-chain monoglycerides with high efficiency (By similarity). In cytotoxic T cells, contributes to perforin-dependent cell lysis, but is unlikely to mediate direct cytotoxicity (PubMed:19451396, PubMed:2302735, PubMed:9813028). Also has low phospholipase activity (By similarity). In neurons, required for the localization of the phospholipid 1-oleoyl-2-palmitoyl-PC (OPPC) to neurite tips through acyl chain remodeling of membrane phospholipids (By similarity). The resulting OPPC-rich lipid membrane domain recruits the t-SNARE protein STX4 by selectively interacting with the STX4 transmembrane domain and this promotes surface expression of the dopamine transporter SLC6A3/DAT at neurite tips by facilitating fusion of SLC6A3-containing transport vesicles with the plasma membrane (By similarity).</text>
</comment>
<comment type="catalytic activity">
    <reaction evidence="7">
        <text>a triacylglycerol + H2O = a diacylglycerol + a fatty acid + H(+)</text>
        <dbReference type="Rhea" id="RHEA:12044"/>
        <dbReference type="ChEBI" id="CHEBI:15377"/>
        <dbReference type="ChEBI" id="CHEBI:15378"/>
        <dbReference type="ChEBI" id="CHEBI:17855"/>
        <dbReference type="ChEBI" id="CHEBI:18035"/>
        <dbReference type="ChEBI" id="CHEBI:28868"/>
        <dbReference type="EC" id="3.1.1.3"/>
    </reaction>
    <physiologicalReaction direction="left-to-right" evidence="11">
        <dbReference type="Rhea" id="RHEA:12045"/>
    </physiologicalReaction>
</comment>
<comment type="catalytic activity">
    <reaction evidence="1">
        <text>a 1,2-diacyl-3-O-(beta-D-galactosyl)-sn-glycerol + 2 H2O = 3-beta-D-galactosyl-sn-glycerol + 2 a fatty acid + 2 H(+)</text>
        <dbReference type="Rhea" id="RHEA:13189"/>
        <dbReference type="ChEBI" id="CHEBI:15377"/>
        <dbReference type="ChEBI" id="CHEBI:15378"/>
        <dbReference type="ChEBI" id="CHEBI:15754"/>
        <dbReference type="ChEBI" id="CHEBI:17615"/>
        <dbReference type="ChEBI" id="CHEBI:28868"/>
        <dbReference type="EC" id="3.1.1.26"/>
    </reaction>
    <physiologicalReaction direction="left-to-right" evidence="1">
        <dbReference type="Rhea" id="RHEA:13190"/>
    </physiologicalReaction>
</comment>
<comment type="catalytic activity">
    <reaction evidence="7">
        <text>1,2,3-tri-(9Z-octadecenoyl)-glycerol + H2O = di-(9Z)-octadecenoylglycerol + (9Z)-octadecenoate + H(+)</text>
        <dbReference type="Rhea" id="RHEA:38575"/>
        <dbReference type="ChEBI" id="CHEBI:15377"/>
        <dbReference type="ChEBI" id="CHEBI:15378"/>
        <dbReference type="ChEBI" id="CHEBI:30823"/>
        <dbReference type="ChEBI" id="CHEBI:53753"/>
        <dbReference type="ChEBI" id="CHEBI:75945"/>
    </reaction>
    <physiologicalReaction direction="left-to-right" evidence="11">
        <dbReference type="Rhea" id="RHEA:38576"/>
    </physiologicalReaction>
</comment>
<comment type="catalytic activity">
    <reaction evidence="1">
        <text>di-(9Z)-octadecenoylglycerol + H2O = (9Z-octadecenoyl)-glycerol + (9Z)-octadecenoate + H(+)</text>
        <dbReference type="Rhea" id="RHEA:47868"/>
        <dbReference type="ChEBI" id="CHEBI:15377"/>
        <dbReference type="ChEBI" id="CHEBI:15378"/>
        <dbReference type="ChEBI" id="CHEBI:30823"/>
        <dbReference type="ChEBI" id="CHEBI:75937"/>
        <dbReference type="ChEBI" id="CHEBI:75945"/>
    </reaction>
    <physiologicalReaction direction="left-to-right" evidence="1">
        <dbReference type="Rhea" id="RHEA:47869"/>
    </physiologicalReaction>
</comment>
<comment type="catalytic activity">
    <reaction evidence="1">
        <text>(9Z-octadecenoyl)-glycerol + H2O = glycerol + (9Z)-octadecenoate + H(+)</text>
        <dbReference type="Rhea" id="RHEA:39955"/>
        <dbReference type="ChEBI" id="CHEBI:15377"/>
        <dbReference type="ChEBI" id="CHEBI:15378"/>
        <dbReference type="ChEBI" id="CHEBI:17754"/>
        <dbReference type="ChEBI" id="CHEBI:30823"/>
        <dbReference type="ChEBI" id="CHEBI:75937"/>
    </reaction>
    <physiologicalReaction direction="left-to-right" evidence="1">
        <dbReference type="Rhea" id="RHEA:39956"/>
    </physiologicalReaction>
</comment>
<comment type="catalytic activity">
    <reaction evidence="1">
        <text>1-(9Z-octadecenoyl)-glycerol + H2O = glycerol + (9Z)-octadecenoate + H(+)</text>
        <dbReference type="Rhea" id="RHEA:38487"/>
        <dbReference type="ChEBI" id="CHEBI:15377"/>
        <dbReference type="ChEBI" id="CHEBI:15378"/>
        <dbReference type="ChEBI" id="CHEBI:17754"/>
        <dbReference type="ChEBI" id="CHEBI:30823"/>
        <dbReference type="ChEBI" id="CHEBI:75342"/>
    </reaction>
    <physiologicalReaction direction="left-to-right" evidence="1">
        <dbReference type="Rhea" id="RHEA:38488"/>
    </physiologicalReaction>
</comment>
<comment type="catalytic activity">
    <reaction evidence="1">
        <text>1,2,3-tripropanoylglycerol + H2O = dipropanoylglycerol + propanoate + H(+)</text>
        <dbReference type="Rhea" id="RHEA:48024"/>
        <dbReference type="ChEBI" id="CHEBI:15377"/>
        <dbReference type="ChEBI" id="CHEBI:15378"/>
        <dbReference type="ChEBI" id="CHEBI:17272"/>
        <dbReference type="ChEBI" id="CHEBI:88153"/>
        <dbReference type="ChEBI" id="CHEBI:88155"/>
    </reaction>
    <physiologicalReaction direction="left-to-right" evidence="1">
        <dbReference type="Rhea" id="RHEA:48025"/>
    </physiologicalReaction>
</comment>
<comment type="catalytic activity">
    <reaction evidence="7">
        <text>1,2,3-tributanoylglycerol + H2O = dibutanoylglycerol + butanoate + H(+)</text>
        <dbReference type="Rhea" id="RHEA:40475"/>
        <dbReference type="ChEBI" id="CHEBI:15377"/>
        <dbReference type="ChEBI" id="CHEBI:15378"/>
        <dbReference type="ChEBI" id="CHEBI:17968"/>
        <dbReference type="ChEBI" id="CHEBI:35020"/>
        <dbReference type="ChEBI" id="CHEBI:76478"/>
    </reaction>
    <physiologicalReaction direction="left-to-right" evidence="11">
        <dbReference type="Rhea" id="RHEA:40476"/>
    </physiologicalReaction>
</comment>
<comment type="catalytic activity">
    <reaction evidence="7">
        <text>1,2,3-trioctanoylglycerol + H2O = dioctanoylglycerol + octanoate + H(+)</text>
        <dbReference type="Rhea" id="RHEA:47864"/>
        <dbReference type="ChEBI" id="CHEBI:15377"/>
        <dbReference type="ChEBI" id="CHEBI:15378"/>
        <dbReference type="ChEBI" id="CHEBI:25646"/>
        <dbReference type="ChEBI" id="CHEBI:76978"/>
        <dbReference type="ChEBI" id="CHEBI:88066"/>
    </reaction>
    <physiologicalReaction direction="left-to-right" evidence="11">
        <dbReference type="Rhea" id="RHEA:47865"/>
    </physiologicalReaction>
</comment>
<comment type="catalytic activity">
    <reaction evidence="1">
        <text>1,2-didecanoylglycerol + H2O = decanoylglycerol + decanoate + H(+)</text>
        <dbReference type="Rhea" id="RHEA:48596"/>
        <dbReference type="ChEBI" id="CHEBI:11152"/>
        <dbReference type="ChEBI" id="CHEBI:15377"/>
        <dbReference type="ChEBI" id="CHEBI:15378"/>
        <dbReference type="ChEBI" id="CHEBI:27689"/>
        <dbReference type="ChEBI" id="CHEBI:90605"/>
    </reaction>
    <physiologicalReaction direction="left-to-right" evidence="1">
        <dbReference type="Rhea" id="RHEA:48597"/>
    </physiologicalReaction>
</comment>
<comment type="catalytic activity">
    <reaction evidence="1">
        <text>long chain 1,2-diacyl-3-O-beta-D-galactosyl-sn-glycerol + H2O = long chain acyl-3-O-beta-D-galactosyl-sn-glycerol + a fatty acid + H(+)</text>
        <dbReference type="Rhea" id="RHEA:48700"/>
        <dbReference type="ChEBI" id="CHEBI:15377"/>
        <dbReference type="ChEBI" id="CHEBI:15378"/>
        <dbReference type="ChEBI" id="CHEBI:28868"/>
        <dbReference type="ChEBI" id="CHEBI:90477"/>
        <dbReference type="ChEBI" id="CHEBI:90770"/>
    </reaction>
    <physiologicalReaction direction="left-to-right" evidence="1">
        <dbReference type="Rhea" id="RHEA:48701"/>
    </physiologicalReaction>
</comment>
<comment type="catalytic activity">
    <reaction evidence="1">
        <text>1,2-dioctanoyl-3-O-beta-D-galactosyl-sn-glycerol + H2O = octanoyl-3-(beta-D-galactosyl)-sn-glycerol + octanoate + H(+)</text>
        <dbReference type="Rhea" id="RHEA:48696"/>
        <dbReference type="ChEBI" id="CHEBI:15377"/>
        <dbReference type="ChEBI" id="CHEBI:15378"/>
        <dbReference type="ChEBI" id="CHEBI:25646"/>
        <dbReference type="ChEBI" id="CHEBI:90453"/>
        <dbReference type="ChEBI" id="CHEBI:90769"/>
    </reaction>
    <physiologicalReaction direction="left-to-right" evidence="1">
        <dbReference type="Rhea" id="RHEA:48697"/>
    </physiologicalReaction>
</comment>
<comment type="catalytic activity">
    <reaction evidence="1">
        <text>1,2-didodecanoyl-3-beta-D-galactosyl-sn-glycerol + H2O = dodecanoyl-3-beta-D-galactosyl-sn-glycerol + dodecanoate + H(+)</text>
        <dbReference type="Rhea" id="RHEA:48540"/>
        <dbReference type="ChEBI" id="CHEBI:15377"/>
        <dbReference type="ChEBI" id="CHEBI:15378"/>
        <dbReference type="ChEBI" id="CHEBI:18262"/>
        <dbReference type="ChEBI" id="CHEBI:90340"/>
        <dbReference type="ChEBI" id="CHEBI:90515"/>
    </reaction>
    <physiologicalReaction direction="left-to-right" evidence="1">
        <dbReference type="Rhea" id="RHEA:48541"/>
    </physiologicalReaction>
</comment>
<comment type="catalytic activity">
    <reaction evidence="1">
        <text>1-beta-D-galactosyl-2,3-didodecanoyl-sn-glycerol + H2O = 1-beta-D-galactosyl-dodecanoyl-sn-glycerol + dodecanoate + H(+)</text>
        <dbReference type="Rhea" id="RHEA:48536"/>
        <dbReference type="ChEBI" id="CHEBI:15377"/>
        <dbReference type="ChEBI" id="CHEBI:15378"/>
        <dbReference type="ChEBI" id="CHEBI:18262"/>
        <dbReference type="ChEBI" id="CHEBI:90342"/>
        <dbReference type="ChEBI" id="CHEBI:90514"/>
    </reaction>
    <physiologicalReaction direction="left-to-right" evidence="1">
        <dbReference type="Rhea" id="RHEA:48537"/>
    </physiologicalReaction>
</comment>
<comment type="catalytic activity">
    <reaction evidence="1">
        <text>a 1,2-diacyl-3-O-[alpha-D-galactosyl-(1-&gt;6)-beta-D-galactosyl]-sn-glycerol + H2O = acyl-3-O-[alpha-D-galactosyl-(1-&gt;6)-beta-D-galactosyl]-sn-glycerol + a fatty acid + H(+)</text>
        <dbReference type="Rhea" id="RHEA:48372"/>
        <dbReference type="ChEBI" id="CHEBI:15377"/>
        <dbReference type="ChEBI" id="CHEBI:15378"/>
        <dbReference type="ChEBI" id="CHEBI:28396"/>
        <dbReference type="ChEBI" id="CHEBI:28868"/>
        <dbReference type="ChEBI" id="CHEBI:90310"/>
    </reaction>
    <physiologicalReaction direction="left-to-right" evidence="1">
        <dbReference type="Rhea" id="RHEA:48373"/>
    </physiologicalReaction>
</comment>
<comment type="catalytic activity">
    <reaction evidence="1">
        <text>long chain 1,2-diacyl-3-O-[alpha-D-galactosyl-(1-&gt;6)-beta-D-galactosyl]-sn-glycerol + H2O = long chain acyl-3-O-[alpha-D-galactosyl-(1-&gt;6)-beta-D-galactosyl]-sn-glycerol + a fatty acid + H(+)</text>
        <dbReference type="Rhea" id="RHEA:48708"/>
        <dbReference type="ChEBI" id="CHEBI:15377"/>
        <dbReference type="ChEBI" id="CHEBI:15378"/>
        <dbReference type="ChEBI" id="CHEBI:28868"/>
        <dbReference type="ChEBI" id="CHEBI:90463"/>
        <dbReference type="ChEBI" id="CHEBI:90774"/>
    </reaction>
    <physiologicalReaction direction="left-to-right" evidence="1">
        <dbReference type="Rhea" id="RHEA:48709"/>
    </physiologicalReaction>
</comment>
<comment type="catalytic activity">
    <reaction evidence="1">
        <text>1,2-dioctanoyl-3-O-[alpha-D-galactosyl-(1-&gt;6)-beta-D-galactosyl]-sn-glycerol + H2O = octanoyl-3-O-[alpha-D-galactosyl-(1-&gt;6)-beta-D-galactosyl]-sn-glycerol + octanoate + H(+)</text>
        <dbReference type="Rhea" id="RHEA:48692"/>
        <dbReference type="ChEBI" id="CHEBI:15377"/>
        <dbReference type="ChEBI" id="CHEBI:15378"/>
        <dbReference type="ChEBI" id="CHEBI:25646"/>
        <dbReference type="ChEBI" id="CHEBI:90457"/>
        <dbReference type="ChEBI" id="CHEBI:90768"/>
    </reaction>
    <physiologicalReaction direction="left-to-right" evidence="1">
        <dbReference type="Rhea" id="RHEA:48693"/>
    </physiologicalReaction>
</comment>
<comment type="catalytic activity">
    <reaction evidence="1">
        <text>1,2-didodecanoyl-3-O-[alpha-D-galactosyl-(1-&gt;6)-beta-D-galactosyl]-sn-glycerol + H2O = dodecanoyl-3-O-[alpha-D-galactosyl-(1-&gt;6)-beta-D-galactosyl]-sn-glycerol + dodecanoate + H(+)</text>
        <dbReference type="Rhea" id="RHEA:48516"/>
        <dbReference type="ChEBI" id="CHEBI:15377"/>
        <dbReference type="ChEBI" id="CHEBI:15378"/>
        <dbReference type="ChEBI" id="CHEBI:18262"/>
        <dbReference type="ChEBI" id="CHEBI:90337"/>
        <dbReference type="ChEBI" id="CHEBI:90359"/>
    </reaction>
    <physiologicalReaction direction="left-to-right" evidence="1">
        <dbReference type="Rhea" id="RHEA:48517"/>
    </physiologicalReaction>
</comment>
<comment type="catalytic activity">
    <reaction evidence="1">
        <text>a 1,2-diacyl-sn-glycero-3-phosphocholine + H2O = a monoacyl-sn-glycero-3-phosphocholine + a fatty acid + H(+)</text>
        <dbReference type="Rhea" id="RHEA:44664"/>
        <dbReference type="ChEBI" id="CHEBI:15377"/>
        <dbReference type="ChEBI" id="CHEBI:15378"/>
        <dbReference type="ChEBI" id="CHEBI:28868"/>
        <dbReference type="ChEBI" id="CHEBI:57643"/>
        <dbReference type="ChEBI" id="CHEBI:84465"/>
    </reaction>
    <physiologicalReaction direction="left-to-right" evidence="1">
        <dbReference type="Rhea" id="RHEA:44665"/>
    </physiologicalReaction>
</comment>
<comment type="activity regulation">
    <text evidence="7 8">CLPS stimulates triacylglycerol lipase activity (PubMed:21382969, PubMed:2302735). Triacylglycerol lipase activity is not inhibited by increasing bile salt concentration (PubMed:21382969).</text>
</comment>
<comment type="pathway">
    <text evidence="1">Glycerolipid metabolism; triacylglycerol degradation.</text>
</comment>
<comment type="pathway">
    <text evidence="1">Glycolipid metabolism.</text>
</comment>
<comment type="subcellular location">
    <subcellularLocation>
        <location evidence="1">Secreted</location>
    </subcellularLocation>
    <subcellularLocation>
        <location evidence="2">Zymogen granule membrane</location>
        <topology evidence="2">Peripheral membrane protein</topology>
    </subcellularLocation>
    <subcellularLocation>
        <location evidence="2">Cell projection</location>
        <location evidence="2">Neuron projection</location>
    </subcellularLocation>
    <text evidence="2">Localizes to neurite tips in neuronal cells.</text>
</comment>
<comment type="tissue specificity">
    <text evidence="9">Expressed in acinar cells of pancreas (at protein level).</text>
</comment>
<comment type="induction">
    <text evidence="6 8">Up-regulated in CD8-positive T cells by IL4/interleukin-4.</text>
</comment>
<comment type="disruption phenotype">
    <text evidence="9">Suckling mutant mice show inefficient fat digestion associated with fat malabsorption and decreased rates of weight gain.</text>
</comment>
<comment type="similarity">
    <text evidence="10">Belongs to the AB hydrolase superfamily. Lipase family.</text>
</comment>
<comment type="caution">
    <text evidence="10">It is uncertain whether Met-1 or Met-15 is the initiator.</text>
</comment>
<protein>
    <recommendedName>
        <fullName evidence="1">Pancreatic lipase-related protein 2</fullName>
        <shortName evidence="1">PL-RP2</shortName>
    </recommendedName>
    <alternativeName>
        <fullName evidence="12">Cytotoxic T lymphocyte lipase</fullName>
    </alternativeName>
    <alternativeName>
        <fullName>Galactolipase</fullName>
        <ecNumber evidence="1">3.1.1.26</ecNumber>
    </alternativeName>
    <alternativeName>
        <fullName>Triacylglycerol lipase</fullName>
        <ecNumber evidence="7">3.1.1.3</ecNumber>
    </alternativeName>
</protein>
<reference key="1">
    <citation type="journal article" date="1990" name="Cell">
        <title>Cloning of an interleukin-4 inducible gene from cytotoxic T lymphocytes and its identification as a lipase.</title>
        <authorList>
            <person name="Grusby M.J."/>
            <person name="Nabavi N."/>
            <person name="Wong H."/>
            <person name="Dick R.F."/>
            <person name="Bluestone J.A."/>
            <person name="Schotz M.C."/>
            <person name="Glimcher L.H."/>
        </authorList>
    </citation>
    <scope>NUCLEOTIDE SEQUENCE [MRNA]</scope>
    <scope>FUNCTION</scope>
    <scope>ACTIVITY REGULATION</scope>
    <scope>INDUCTION BY IL4</scope>
    <source>
        <tissue>T-cell</tissue>
    </source>
</reference>
<reference key="2">
    <citation type="journal article" date="2005" name="Science">
        <title>The transcriptional landscape of the mammalian genome.</title>
        <authorList>
            <person name="Carninci P."/>
            <person name="Kasukawa T."/>
            <person name="Katayama S."/>
            <person name="Gough J."/>
            <person name="Frith M.C."/>
            <person name="Maeda N."/>
            <person name="Oyama R."/>
            <person name="Ravasi T."/>
            <person name="Lenhard B."/>
            <person name="Wells C."/>
            <person name="Kodzius R."/>
            <person name="Shimokawa K."/>
            <person name="Bajic V.B."/>
            <person name="Brenner S.E."/>
            <person name="Batalov S."/>
            <person name="Forrest A.R."/>
            <person name="Zavolan M."/>
            <person name="Davis M.J."/>
            <person name="Wilming L.G."/>
            <person name="Aidinis V."/>
            <person name="Allen J.E."/>
            <person name="Ambesi-Impiombato A."/>
            <person name="Apweiler R."/>
            <person name="Aturaliya R.N."/>
            <person name="Bailey T.L."/>
            <person name="Bansal M."/>
            <person name="Baxter L."/>
            <person name="Beisel K.W."/>
            <person name="Bersano T."/>
            <person name="Bono H."/>
            <person name="Chalk A.M."/>
            <person name="Chiu K.P."/>
            <person name="Choudhary V."/>
            <person name="Christoffels A."/>
            <person name="Clutterbuck D.R."/>
            <person name="Crowe M.L."/>
            <person name="Dalla E."/>
            <person name="Dalrymple B.P."/>
            <person name="de Bono B."/>
            <person name="Della Gatta G."/>
            <person name="di Bernardo D."/>
            <person name="Down T."/>
            <person name="Engstrom P."/>
            <person name="Fagiolini M."/>
            <person name="Faulkner G."/>
            <person name="Fletcher C.F."/>
            <person name="Fukushima T."/>
            <person name="Furuno M."/>
            <person name="Futaki S."/>
            <person name="Gariboldi M."/>
            <person name="Georgii-Hemming P."/>
            <person name="Gingeras T.R."/>
            <person name="Gojobori T."/>
            <person name="Green R.E."/>
            <person name="Gustincich S."/>
            <person name="Harbers M."/>
            <person name="Hayashi Y."/>
            <person name="Hensch T.K."/>
            <person name="Hirokawa N."/>
            <person name="Hill D."/>
            <person name="Huminiecki L."/>
            <person name="Iacono M."/>
            <person name="Ikeo K."/>
            <person name="Iwama A."/>
            <person name="Ishikawa T."/>
            <person name="Jakt M."/>
            <person name="Kanapin A."/>
            <person name="Katoh M."/>
            <person name="Kawasawa Y."/>
            <person name="Kelso J."/>
            <person name="Kitamura H."/>
            <person name="Kitano H."/>
            <person name="Kollias G."/>
            <person name="Krishnan S.P."/>
            <person name="Kruger A."/>
            <person name="Kummerfeld S.K."/>
            <person name="Kurochkin I.V."/>
            <person name="Lareau L.F."/>
            <person name="Lazarevic D."/>
            <person name="Lipovich L."/>
            <person name="Liu J."/>
            <person name="Liuni S."/>
            <person name="McWilliam S."/>
            <person name="Madan Babu M."/>
            <person name="Madera M."/>
            <person name="Marchionni L."/>
            <person name="Matsuda H."/>
            <person name="Matsuzawa S."/>
            <person name="Miki H."/>
            <person name="Mignone F."/>
            <person name="Miyake S."/>
            <person name="Morris K."/>
            <person name="Mottagui-Tabar S."/>
            <person name="Mulder N."/>
            <person name="Nakano N."/>
            <person name="Nakauchi H."/>
            <person name="Ng P."/>
            <person name="Nilsson R."/>
            <person name="Nishiguchi S."/>
            <person name="Nishikawa S."/>
            <person name="Nori F."/>
            <person name="Ohara O."/>
            <person name="Okazaki Y."/>
            <person name="Orlando V."/>
            <person name="Pang K.C."/>
            <person name="Pavan W.J."/>
            <person name="Pavesi G."/>
            <person name="Pesole G."/>
            <person name="Petrovsky N."/>
            <person name="Piazza S."/>
            <person name="Reed J."/>
            <person name="Reid J.F."/>
            <person name="Ring B.Z."/>
            <person name="Ringwald M."/>
            <person name="Rost B."/>
            <person name="Ruan Y."/>
            <person name="Salzberg S.L."/>
            <person name="Sandelin A."/>
            <person name="Schneider C."/>
            <person name="Schoenbach C."/>
            <person name="Sekiguchi K."/>
            <person name="Semple C.A."/>
            <person name="Seno S."/>
            <person name="Sessa L."/>
            <person name="Sheng Y."/>
            <person name="Shibata Y."/>
            <person name="Shimada H."/>
            <person name="Shimada K."/>
            <person name="Silva D."/>
            <person name="Sinclair B."/>
            <person name="Sperling S."/>
            <person name="Stupka E."/>
            <person name="Sugiura K."/>
            <person name="Sultana R."/>
            <person name="Takenaka Y."/>
            <person name="Taki K."/>
            <person name="Tammoja K."/>
            <person name="Tan S.L."/>
            <person name="Tang S."/>
            <person name="Taylor M.S."/>
            <person name="Tegner J."/>
            <person name="Teichmann S.A."/>
            <person name="Ueda H.R."/>
            <person name="van Nimwegen E."/>
            <person name="Verardo R."/>
            <person name="Wei C.L."/>
            <person name="Yagi K."/>
            <person name="Yamanishi H."/>
            <person name="Zabarovsky E."/>
            <person name="Zhu S."/>
            <person name="Zimmer A."/>
            <person name="Hide W."/>
            <person name="Bult C."/>
            <person name="Grimmond S.M."/>
            <person name="Teasdale R.D."/>
            <person name="Liu E.T."/>
            <person name="Brusic V."/>
            <person name="Quackenbush J."/>
            <person name="Wahlestedt C."/>
            <person name="Mattick J.S."/>
            <person name="Hume D.A."/>
            <person name="Kai C."/>
            <person name="Sasaki D."/>
            <person name="Tomaru Y."/>
            <person name="Fukuda S."/>
            <person name="Kanamori-Katayama M."/>
            <person name="Suzuki M."/>
            <person name="Aoki J."/>
            <person name="Arakawa T."/>
            <person name="Iida J."/>
            <person name="Imamura K."/>
            <person name="Itoh M."/>
            <person name="Kato T."/>
            <person name="Kawaji H."/>
            <person name="Kawagashira N."/>
            <person name="Kawashima T."/>
            <person name="Kojima M."/>
            <person name="Kondo S."/>
            <person name="Konno H."/>
            <person name="Nakano K."/>
            <person name="Ninomiya N."/>
            <person name="Nishio T."/>
            <person name="Okada M."/>
            <person name="Plessy C."/>
            <person name="Shibata K."/>
            <person name="Shiraki T."/>
            <person name="Suzuki S."/>
            <person name="Tagami M."/>
            <person name="Waki K."/>
            <person name="Watahiki A."/>
            <person name="Okamura-Oho Y."/>
            <person name="Suzuki H."/>
            <person name="Kawai J."/>
            <person name="Hayashizaki Y."/>
        </authorList>
    </citation>
    <scope>NUCLEOTIDE SEQUENCE [LARGE SCALE MRNA]</scope>
    <source>
        <strain>C57BL/6J</strain>
        <tissue>Stomach</tissue>
    </source>
</reference>
<reference key="3">
    <citation type="journal article" date="2009" name="PLoS Biol.">
        <title>Lineage-specific biology revealed by a finished genome assembly of the mouse.</title>
        <authorList>
            <person name="Church D.M."/>
            <person name="Goodstadt L."/>
            <person name="Hillier L.W."/>
            <person name="Zody M.C."/>
            <person name="Goldstein S."/>
            <person name="She X."/>
            <person name="Bult C.J."/>
            <person name="Agarwala R."/>
            <person name="Cherry J.L."/>
            <person name="DiCuccio M."/>
            <person name="Hlavina W."/>
            <person name="Kapustin Y."/>
            <person name="Meric P."/>
            <person name="Maglott D."/>
            <person name="Birtle Z."/>
            <person name="Marques A.C."/>
            <person name="Graves T."/>
            <person name="Zhou S."/>
            <person name="Teague B."/>
            <person name="Potamousis K."/>
            <person name="Churas C."/>
            <person name="Place M."/>
            <person name="Herschleb J."/>
            <person name="Runnheim R."/>
            <person name="Forrest D."/>
            <person name="Amos-Landgraf J."/>
            <person name="Schwartz D.C."/>
            <person name="Cheng Z."/>
            <person name="Lindblad-Toh K."/>
            <person name="Eichler E.E."/>
            <person name="Ponting C.P."/>
        </authorList>
    </citation>
    <scope>NUCLEOTIDE SEQUENCE [LARGE SCALE GENOMIC DNA]</scope>
    <source>
        <strain>C57BL/6J</strain>
    </source>
</reference>
<reference key="4">
    <citation type="journal article" date="2004" name="Genome Res.">
        <title>The status, quality, and expansion of the NIH full-length cDNA project: the Mammalian Gene Collection (MGC).</title>
        <authorList>
            <consortium name="The MGC Project Team"/>
        </authorList>
    </citation>
    <scope>NUCLEOTIDE SEQUENCE [LARGE SCALE MRNA]</scope>
    <source>
        <tissue>Pancreas</tissue>
    </source>
</reference>
<reference key="5">
    <citation type="journal article" date="1998" name="J. Biol. Chem.">
        <title>Decreased neonatal dietary fat absorption and T cell cytotoxicity in pancreatic lipase-related protein 2-deficient mice.</title>
        <authorList>
            <person name="Lowe M.E."/>
            <person name="Kaplan M.H."/>
            <person name="Jackson-Grusby L."/>
            <person name="D'Agostino D."/>
            <person name="Grusby M.J."/>
        </authorList>
    </citation>
    <scope>FUNCTION</scope>
    <scope>DISRUPTION PHENOTYPE</scope>
    <scope>TISSUE SPECIFICITY</scope>
</reference>
<reference key="6">
    <citation type="journal article" date="2009" name="J. Leukoc. Biol.">
        <title>Pancreatic lipase-related protein 2 (PLRP2) induction by IL-4 in cytotoxic T lymphocytes (CTLs) and reevaluation of the negative effects of its gene ablation on cytotoxicity.</title>
        <authorList>
            <person name="Alves B.N."/>
            <person name="Leong J."/>
            <person name="Tamang D.L."/>
            <person name="Elliott V."/>
            <person name="Edelnant J."/>
            <person name="Redelman D."/>
            <person name="Singer C.A."/>
            <person name="Kuhn A.R."/>
            <person name="Miller R."/>
            <person name="Lowe M.E."/>
            <person name="Hudig D."/>
        </authorList>
    </citation>
    <scope>FUNCTION</scope>
    <scope>INDUCTION BY IL4</scope>
</reference>
<reference key="7">
    <citation type="journal article" date="2010" name="Cell">
        <title>A tissue-specific atlas of mouse protein phosphorylation and expression.</title>
        <authorList>
            <person name="Huttlin E.L."/>
            <person name="Jedrychowski M.P."/>
            <person name="Elias J.E."/>
            <person name="Goswami T."/>
            <person name="Rad R."/>
            <person name="Beausoleil S.A."/>
            <person name="Villen J."/>
            <person name="Haas W."/>
            <person name="Sowa M.E."/>
            <person name="Gygi S.P."/>
        </authorList>
    </citation>
    <scope>IDENTIFICATION BY MASS SPECTROMETRY [LARGE SCALE ANALYSIS]</scope>
    <source>
        <tissue>Pancreas</tissue>
    </source>
</reference>
<reference key="8">
    <citation type="journal article" date="2011" name="J. Lipid Res.">
        <title>Kinetic properties of mouse pancreatic lipase-related protein-2 suggest the mouse may not model human fat digestion.</title>
        <authorList>
            <person name="Xiao X."/>
            <person name="Ross L.E."/>
            <person name="Miller R.A."/>
            <person name="Lowe M.E."/>
        </authorList>
    </citation>
    <scope>FUNCTION</scope>
    <scope>CATALYTIC ACTIVITY</scope>
    <scope>ACTIVITY REGULATION</scope>
</reference>
<dbReference type="EC" id="3.1.1.26" evidence="1"/>
<dbReference type="EC" id="3.1.1.3" evidence="7"/>
<dbReference type="EMBL" id="M30687">
    <property type="protein sequence ID" value="AAA37491.1"/>
    <property type="molecule type" value="mRNA"/>
</dbReference>
<dbReference type="EMBL" id="AK131882">
    <property type="protein sequence ID" value="BAE20849.1"/>
    <property type="molecule type" value="mRNA"/>
</dbReference>
<dbReference type="EMBL" id="AC102548">
    <property type="status" value="NOT_ANNOTATED_CDS"/>
    <property type="molecule type" value="Genomic_DNA"/>
</dbReference>
<dbReference type="EMBL" id="AC127545">
    <property type="status" value="NOT_ANNOTATED_CDS"/>
    <property type="molecule type" value="Genomic_DNA"/>
</dbReference>
<dbReference type="EMBL" id="BC094923">
    <property type="protein sequence ID" value="AAH94923.1"/>
    <property type="molecule type" value="mRNA"/>
</dbReference>
<dbReference type="CCDS" id="CCDS38030.1"/>
<dbReference type="PIR" id="A34671">
    <property type="entry name" value="A34671"/>
</dbReference>
<dbReference type="RefSeq" id="NP_035258.2">
    <property type="nucleotide sequence ID" value="NM_011128.2"/>
</dbReference>
<dbReference type="SMR" id="P17892"/>
<dbReference type="FunCoup" id="P17892">
    <property type="interactions" value="100"/>
</dbReference>
<dbReference type="STRING" id="10090.ENSMUSP00000026081"/>
<dbReference type="SwissLipids" id="SLP:000001480"/>
<dbReference type="ESTHER" id="mouse-LIPR2">
    <property type="family name" value="Pancreatic_lipase"/>
</dbReference>
<dbReference type="GlyCosmos" id="P17892">
    <property type="glycosylation" value="3 sites, No reported glycans"/>
</dbReference>
<dbReference type="GlyGen" id="P17892">
    <property type="glycosylation" value="3 sites"/>
</dbReference>
<dbReference type="PhosphoSitePlus" id="P17892"/>
<dbReference type="PaxDb" id="10090-ENSMUSP00000026081"/>
<dbReference type="PeptideAtlas" id="P17892"/>
<dbReference type="ProteomicsDB" id="292263"/>
<dbReference type="Antibodypedia" id="73327">
    <property type="antibodies" value="85 antibodies from 17 providers"/>
</dbReference>
<dbReference type="DNASU" id="18947"/>
<dbReference type="Ensembl" id="ENSMUST00000026081.5">
    <property type="protein sequence ID" value="ENSMUSP00000026081.4"/>
    <property type="gene ID" value="ENSMUSG00000025091.5"/>
</dbReference>
<dbReference type="GeneID" id="18947"/>
<dbReference type="KEGG" id="mmu:18947"/>
<dbReference type="UCSC" id="uc008iau.2">
    <property type="organism name" value="mouse"/>
</dbReference>
<dbReference type="AGR" id="MGI:1336202"/>
<dbReference type="CTD" id="5408"/>
<dbReference type="MGI" id="MGI:1336202">
    <property type="gene designation" value="Pnliprp2"/>
</dbReference>
<dbReference type="VEuPathDB" id="HostDB:ENSMUSG00000025091"/>
<dbReference type="eggNOG" id="ENOG502QUK7">
    <property type="taxonomic scope" value="Eukaryota"/>
</dbReference>
<dbReference type="GeneTree" id="ENSGT00940000155139"/>
<dbReference type="InParanoid" id="P17892"/>
<dbReference type="OMA" id="CYRPLGC"/>
<dbReference type="OrthoDB" id="199913at2759"/>
<dbReference type="PhylomeDB" id="P17892"/>
<dbReference type="TreeFam" id="TF324997"/>
<dbReference type="Reactome" id="R-MMU-192456">
    <property type="pathway name" value="Digestion of dietary lipid"/>
</dbReference>
<dbReference type="UniPathway" id="UPA00256"/>
<dbReference type="BioGRID-ORCS" id="18947">
    <property type="hits" value="1 hit in 79 CRISPR screens"/>
</dbReference>
<dbReference type="ChiTaRS" id="Pnliprp2">
    <property type="organism name" value="mouse"/>
</dbReference>
<dbReference type="PRO" id="PR:P17892"/>
<dbReference type="Proteomes" id="UP000000589">
    <property type="component" value="Chromosome 19"/>
</dbReference>
<dbReference type="RNAct" id="P17892">
    <property type="molecule type" value="protein"/>
</dbReference>
<dbReference type="Bgee" id="ENSMUSG00000025091">
    <property type="expression patterns" value="Expressed in crypt of Lieberkuhn of small intestine and 57 other cell types or tissues"/>
</dbReference>
<dbReference type="GO" id="GO:0005615">
    <property type="term" value="C:extracellular space"/>
    <property type="evidence" value="ECO:0000250"/>
    <property type="project" value="UniProtKB"/>
</dbReference>
<dbReference type="GO" id="GO:0043005">
    <property type="term" value="C:neuron projection"/>
    <property type="evidence" value="ECO:0000250"/>
    <property type="project" value="UniProtKB"/>
</dbReference>
<dbReference type="GO" id="GO:0042589">
    <property type="term" value="C:zymogen granule membrane"/>
    <property type="evidence" value="ECO:0007669"/>
    <property type="project" value="UniProtKB-SubCell"/>
</dbReference>
<dbReference type="GO" id="GO:0005509">
    <property type="term" value="F:calcium ion binding"/>
    <property type="evidence" value="ECO:0000250"/>
    <property type="project" value="UniProtKB"/>
</dbReference>
<dbReference type="GO" id="GO:0047714">
    <property type="term" value="F:galactolipase activity"/>
    <property type="evidence" value="ECO:0000250"/>
    <property type="project" value="UniProtKB"/>
</dbReference>
<dbReference type="GO" id="GO:0047372">
    <property type="term" value="F:monoacylglycerol lipase activity"/>
    <property type="evidence" value="ECO:0000250"/>
    <property type="project" value="UniProtKB"/>
</dbReference>
<dbReference type="GO" id="GO:0004620">
    <property type="term" value="F:phospholipase activity"/>
    <property type="evidence" value="ECO:0000250"/>
    <property type="project" value="UniProtKB"/>
</dbReference>
<dbReference type="GO" id="GO:0004806">
    <property type="term" value="F:triacylglycerol lipase activity"/>
    <property type="evidence" value="ECO:0000314"/>
    <property type="project" value="UniProtKB"/>
</dbReference>
<dbReference type="GO" id="GO:0006968">
    <property type="term" value="P:cellular defense response"/>
    <property type="evidence" value="ECO:0000315"/>
    <property type="project" value="MGI"/>
</dbReference>
<dbReference type="GO" id="GO:0019376">
    <property type="term" value="P:galactolipid catabolic process"/>
    <property type="evidence" value="ECO:0000250"/>
    <property type="project" value="UniProtKB"/>
</dbReference>
<dbReference type="GO" id="GO:0044258">
    <property type="term" value="P:intestinal lipid catabolic process"/>
    <property type="evidence" value="ECO:0000315"/>
    <property type="project" value="MGI"/>
</dbReference>
<dbReference type="GO" id="GO:0034638">
    <property type="term" value="P:phosphatidylcholine catabolic process"/>
    <property type="evidence" value="ECO:0000250"/>
    <property type="project" value="UniProtKB"/>
</dbReference>
<dbReference type="GO" id="GO:0009395">
    <property type="term" value="P:phospholipid catabolic process"/>
    <property type="evidence" value="ECO:0000250"/>
    <property type="project" value="UniProtKB"/>
</dbReference>
<dbReference type="GO" id="GO:0006644">
    <property type="term" value="P:phospholipid metabolic process"/>
    <property type="evidence" value="ECO:0000250"/>
    <property type="project" value="UniProtKB"/>
</dbReference>
<dbReference type="GO" id="GO:0009617">
    <property type="term" value="P:response to bacterium"/>
    <property type="evidence" value="ECO:0000270"/>
    <property type="project" value="MGI"/>
</dbReference>
<dbReference type="GO" id="GO:0019433">
    <property type="term" value="P:triglyceride catabolic process"/>
    <property type="evidence" value="ECO:0000250"/>
    <property type="project" value="UniProtKB"/>
</dbReference>
<dbReference type="CDD" id="cd00707">
    <property type="entry name" value="Pancreat_lipase_like"/>
    <property type="match status" value="1"/>
</dbReference>
<dbReference type="CDD" id="cd01759">
    <property type="entry name" value="PLAT_PL"/>
    <property type="match status" value="1"/>
</dbReference>
<dbReference type="FunFam" id="3.40.50.1820:FF:000033">
    <property type="entry name" value="Pancreatic triacylglycerol lipase"/>
    <property type="match status" value="1"/>
</dbReference>
<dbReference type="FunFam" id="2.60.60.20:FF:000003">
    <property type="entry name" value="Triacylglycerol lipase"/>
    <property type="match status" value="1"/>
</dbReference>
<dbReference type="Gene3D" id="3.40.50.1820">
    <property type="entry name" value="alpha/beta hydrolase"/>
    <property type="match status" value="1"/>
</dbReference>
<dbReference type="Gene3D" id="2.60.60.20">
    <property type="entry name" value="PLAT/LH2 domain"/>
    <property type="match status" value="1"/>
</dbReference>
<dbReference type="InterPro" id="IPR029058">
    <property type="entry name" value="AB_hydrolase_fold"/>
</dbReference>
<dbReference type="InterPro" id="IPR013818">
    <property type="entry name" value="Lipase"/>
</dbReference>
<dbReference type="InterPro" id="IPR016272">
    <property type="entry name" value="Lipase_LIPH"/>
</dbReference>
<dbReference type="InterPro" id="IPR033906">
    <property type="entry name" value="Lipase_N"/>
</dbReference>
<dbReference type="InterPro" id="IPR002331">
    <property type="entry name" value="Lipase_panc"/>
</dbReference>
<dbReference type="InterPro" id="IPR001024">
    <property type="entry name" value="PLAT/LH2_dom"/>
</dbReference>
<dbReference type="InterPro" id="IPR036392">
    <property type="entry name" value="PLAT/LH2_dom_sf"/>
</dbReference>
<dbReference type="InterPro" id="IPR000734">
    <property type="entry name" value="TAG_lipase"/>
</dbReference>
<dbReference type="PANTHER" id="PTHR11610">
    <property type="entry name" value="LIPASE"/>
    <property type="match status" value="1"/>
</dbReference>
<dbReference type="PANTHER" id="PTHR11610:SF165">
    <property type="entry name" value="PANCREATIC LIPASE-RELATED PROTEIN 2"/>
    <property type="match status" value="1"/>
</dbReference>
<dbReference type="Pfam" id="PF00151">
    <property type="entry name" value="Lipase"/>
    <property type="match status" value="1"/>
</dbReference>
<dbReference type="Pfam" id="PF01477">
    <property type="entry name" value="PLAT"/>
    <property type="match status" value="1"/>
</dbReference>
<dbReference type="PIRSF" id="PIRSF000865">
    <property type="entry name" value="Lipoprotein_lipase_LIPH"/>
    <property type="match status" value="1"/>
</dbReference>
<dbReference type="PRINTS" id="PR00823">
    <property type="entry name" value="PANCLIPASE"/>
</dbReference>
<dbReference type="PRINTS" id="PR00821">
    <property type="entry name" value="TAGLIPASE"/>
</dbReference>
<dbReference type="SMART" id="SM00308">
    <property type="entry name" value="LH2"/>
    <property type="match status" value="1"/>
</dbReference>
<dbReference type="SUPFAM" id="SSF53474">
    <property type="entry name" value="alpha/beta-Hydrolases"/>
    <property type="match status" value="1"/>
</dbReference>
<dbReference type="SUPFAM" id="SSF49723">
    <property type="entry name" value="Lipase/lipooxygenase domain (PLAT/LH2 domain)"/>
    <property type="match status" value="1"/>
</dbReference>
<dbReference type="PROSITE" id="PS00120">
    <property type="entry name" value="LIPASE_SER"/>
    <property type="match status" value="1"/>
</dbReference>
<dbReference type="PROSITE" id="PS50095">
    <property type="entry name" value="PLAT"/>
    <property type="match status" value="1"/>
</dbReference>
<organism>
    <name type="scientific">Mus musculus</name>
    <name type="common">Mouse</name>
    <dbReference type="NCBI Taxonomy" id="10090"/>
    <lineage>
        <taxon>Eukaryota</taxon>
        <taxon>Metazoa</taxon>
        <taxon>Chordata</taxon>
        <taxon>Craniata</taxon>
        <taxon>Vertebrata</taxon>
        <taxon>Euteleostomi</taxon>
        <taxon>Mammalia</taxon>
        <taxon>Eutheria</taxon>
        <taxon>Euarchontoglires</taxon>
        <taxon>Glires</taxon>
        <taxon>Rodentia</taxon>
        <taxon>Myomorpha</taxon>
        <taxon>Muroidea</taxon>
        <taxon>Muridae</taxon>
        <taxon>Murinae</taxon>
        <taxon>Mus</taxon>
        <taxon>Mus</taxon>
    </lineage>
</organism>
<name>LIPR2_MOUSE</name>
<sequence length="482" mass="54017">MPMDVRGCLFPSVQMLLCWLVSLLLATVGGKEVCYGHLGCFSNDKPWAGMIQRPSKIFPWSPEDIDTRFLLYTNENPNNYQIISATDPATINASNFQLDRKTRFIIHGFIDKGEEGWLLDMCKKMFQVEKVNCICVDWKRGSRTEYTQASYNTRVVGAEIAFLVQVLSTEMGYSPENVHLIGHSLGSHVAGEAGRRLEGHVGRITGLDPAEPCFQGLPEEVRLDPSDAMFVDVIHTDSAPIIPYLGFGMSQKVGHLDFFPNGGKEMPGCQKNILSTIVDINGIWEGTRNFAACNHLRSYKYYASSILNPDGFLGYPCSSYEKFQHNDCFPCPEQGCPKMGHYADQFEGKTATVEQTFFLNTGDSGNFTRWRYKVSVTLSGAKKLSGYILVALYGCNGNSKQYEVFKGSLQPEARYIRDIDVDVNVGEIQKVKFLWNNKVINLFRPTMGASQITVQRGKDGKEFNFCSSNTVHEDVLQSLYPC</sequence>
<gene>
    <name evidence="13" type="primary">Pnliprp2</name>
    <name evidence="1" type="synonym">Plrp2</name>
</gene>